<protein>
    <recommendedName>
        <fullName evidence="1">Glycine--tRNA ligase beta subunit</fullName>
        <ecNumber evidence="1">6.1.1.14</ecNumber>
    </recommendedName>
    <alternativeName>
        <fullName evidence="1">Glycyl-tRNA synthetase beta subunit</fullName>
        <shortName evidence="1">GlyRS</shortName>
    </alternativeName>
</protein>
<accession>B6INH0</accession>
<evidence type="ECO:0000255" key="1">
    <source>
        <dbReference type="HAMAP-Rule" id="MF_00255"/>
    </source>
</evidence>
<sequence>MAELLIELFMEEIPARMQVRAGEDFRRLVTDRLAAAGIQFQRAEVHTTPRRIALVVEGIPARQADVREERKGPRVGSPEQALQGFLRAAGLTDISQAEQRDTGKGVFYFAVIEKPGGATIDALPALIDGAIRDLPWPKSMRWGTNQFRWVRPLHGILALFDGQVVPGGLTIGTAEPPPETSEGNACLAGEATARVIRYGNETKGHRFLSPDTLTVTSFEDYKAKLRGAHVILDREERKQLILAGARAAAEAEGLVLKDDPGLLEEVAGLVEWPVVLVGGIDEQFMDVPAEVLTTSMRTHQRYFALETTQGKLAPRFVVVANRPTVDGGAAVVAGNERVLRARLSDAKFFWDQDLATPLETRRQALADIKFHEKLGTMLERAERIEALAVEIARTLGLDTGALERVRIAARLCKADLVTGVVGEFPEVQGILGGHVARAQDLPADVADAIADHYRPLGPSDRVPADPVAVAVALADKIDTLVAFFAIDEKPTGSRDPFALRRAALGVIRLIVENGLRASLLPLFGRAAVAVPAAAGETVGGDLLSFFADRLKVALKEKGVRHDLIDAVFGLGGQDDLVLLLKRVDALAGFVASEDGANLLVAYRRAANILRIEEKKDGVSYSGGGIDAGRLEQAEERALAAALDATAADLAPLLAAEDFTGAMRLLSALRGPVDAFFDKVTVNAPDAVLRANRLRLLARIRDTLNGVADFSRIEG</sequence>
<gene>
    <name evidence="1" type="primary">glyS</name>
    <name type="ordered locus">RC1_1668</name>
</gene>
<reference key="1">
    <citation type="submission" date="2007-03" db="EMBL/GenBank/DDBJ databases">
        <title>Genome sequence of Rhodospirillum centenum.</title>
        <authorList>
            <person name="Touchman J.W."/>
            <person name="Bauer C."/>
            <person name="Blankenship R.E."/>
        </authorList>
    </citation>
    <scope>NUCLEOTIDE SEQUENCE [LARGE SCALE GENOMIC DNA]</scope>
    <source>
        <strain>ATCC 51521 / SW</strain>
    </source>
</reference>
<proteinExistence type="inferred from homology"/>
<organism>
    <name type="scientific">Rhodospirillum centenum (strain ATCC 51521 / SW)</name>
    <dbReference type="NCBI Taxonomy" id="414684"/>
    <lineage>
        <taxon>Bacteria</taxon>
        <taxon>Pseudomonadati</taxon>
        <taxon>Pseudomonadota</taxon>
        <taxon>Alphaproteobacteria</taxon>
        <taxon>Rhodospirillales</taxon>
        <taxon>Rhodospirillaceae</taxon>
        <taxon>Rhodospirillum</taxon>
    </lineage>
</organism>
<name>SYGB_RHOCS</name>
<dbReference type="EC" id="6.1.1.14" evidence="1"/>
<dbReference type="EMBL" id="CP000613">
    <property type="protein sequence ID" value="ACI99067.1"/>
    <property type="molecule type" value="Genomic_DNA"/>
</dbReference>
<dbReference type="RefSeq" id="WP_012566852.1">
    <property type="nucleotide sequence ID" value="NC_011420.2"/>
</dbReference>
<dbReference type="SMR" id="B6INH0"/>
<dbReference type="STRING" id="414684.RC1_1668"/>
<dbReference type="KEGG" id="rce:RC1_1668"/>
<dbReference type="eggNOG" id="COG0751">
    <property type="taxonomic scope" value="Bacteria"/>
</dbReference>
<dbReference type="HOGENOM" id="CLU_007220_2_1_5"/>
<dbReference type="OrthoDB" id="9775440at2"/>
<dbReference type="Proteomes" id="UP000001591">
    <property type="component" value="Chromosome"/>
</dbReference>
<dbReference type="GO" id="GO:0005829">
    <property type="term" value="C:cytosol"/>
    <property type="evidence" value="ECO:0007669"/>
    <property type="project" value="TreeGrafter"/>
</dbReference>
<dbReference type="GO" id="GO:0004814">
    <property type="term" value="F:arginine-tRNA ligase activity"/>
    <property type="evidence" value="ECO:0007669"/>
    <property type="project" value="InterPro"/>
</dbReference>
<dbReference type="GO" id="GO:0005524">
    <property type="term" value="F:ATP binding"/>
    <property type="evidence" value="ECO:0007669"/>
    <property type="project" value="UniProtKB-UniRule"/>
</dbReference>
<dbReference type="GO" id="GO:0004820">
    <property type="term" value="F:glycine-tRNA ligase activity"/>
    <property type="evidence" value="ECO:0007669"/>
    <property type="project" value="UniProtKB-UniRule"/>
</dbReference>
<dbReference type="GO" id="GO:0006420">
    <property type="term" value="P:arginyl-tRNA aminoacylation"/>
    <property type="evidence" value="ECO:0007669"/>
    <property type="project" value="InterPro"/>
</dbReference>
<dbReference type="GO" id="GO:0006426">
    <property type="term" value="P:glycyl-tRNA aminoacylation"/>
    <property type="evidence" value="ECO:0007669"/>
    <property type="project" value="UniProtKB-UniRule"/>
</dbReference>
<dbReference type="HAMAP" id="MF_00255">
    <property type="entry name" value="Gly_tRNA_synth_beta"/>
    <property type="match status" value="1"/>
</dbReference>
<dbReference type="InterPro" id="IPR008909">
    <property type="entry name" value="DALR_anticod-bd"/>
</dbReference>
<dbReference type="InterPro" id="IPR015944">
    <property type="entry name" value="Gly-tRNA-synth_bsu"/>
</dbReference>
<dbReference type="InterPro" id="IPR006194">
    <property type="entry name" value="Gly-tRNA-synth_heterodimer"/>
</dbReference>
<dbReference type="NCBIfam" id="TIGR00211">
    <property type="entry name" value="glyS"/>
    <property type="match status" value="1"/>
</dbReference>
<dbReference type="PANTHER" id="PTHR30075:SF2">
    <property type="entry name" value="GLYCINE--TRNA LIGASE, CHLOROPLASTIC_MITOCHONDRIAL 2"/>
    <property type="match status" value="1"/>
</dbReference>
<dbReference type="PANTHER" id="PTHR30075">
    <property type="entry name" value="GLYCYL-TRNA SYNTHETASE"/>
    <property type="match status" value="1"/>
</dbReference>
<dbReference type="Pfam" id="PF05746">
    <property type="entry name" value="DALR_1"/>
    <property type="match status" value="1"/>
</dbReference>
<dbReference type="Pfam" id="PF02092">
    <property type="entry name" value="tRNA_synt_2f"/>
    <property type="match status" value="1"/>
</dbReference>
<dbReference type="PRINTS" id="PR01045">
    <property type="entry name" value="TRNASYNTHGB"/>
</dbReference>
<dbReference type="SUPFAM" id="SSF109604">
    <property type="entry name" value="HD-domain/PDEase-like"/>
    <property type="match status" value="1"/>
</dbReference>
<dbReference type="PROSITE" id="PS50861">
    <property type="entry name" value="AA_TRNA_LIGASE_II_GLYAB"/>
    <property type="match status" value="1"/>
</dbReference>
<feature type="chain" id="PRO_1000101323" description="Glycine--tRNA ligase beta subunit">
    <location>
        <begin position="1"/>
        <end position="714"/>
    </location>
</feature>
<comment type="catalytic activity">
    <reaction evidence="1">
        <text>tRNA(Gly) + glycine + ATP = glycyl-tRNA(Gly) + AMP + diphosphate</text>
        <dbReference type="Rhea" id="RHEA:16013"/>
        <dbReference type="Rhea" id="RHEA-COMP:9664"/>
        <dbReference type="Rhea" id="RHEA-COMP:9683"/>
        <dbReference type="ChEBI" id="CHEBI:30616"/>
        <dbReference type="ChEBI" id="CHEBI:33019"/>
        <dbReference type="ChEBI" id="CHEBI:57305"/>
        <dbReference type="ChEBI" id="CHEBI:78442"/>
        <dbReference type="ChEBI" id="CHEBI:78522"/>
        <dbReference type="ChEBI" id="CHEBI:456215"/>
        <dbReference type="EC" id="6.1.1.14"/>
    </reaction>
</comment>
<comment type="subunit">
    <text evidence="1">Tetramer of two alpha and two beta subunits.</text>
</comment>
<comment type="subcellular location">
    <subcellularLocation>
        <location evidence="1">Cytoplasm</location>
    </subcellularLocation>
</comment>
<comment type="similarity">
    <text evidence="1">Belongs to the class-II aminoacyl-tRNA synthetase family.</text>
</comment>
<keyword id="KW-0030">Aminoacyl-tRNA synthetase</keyword>
<keyword id="KW-0067">ATP-binding</keyword>
<keyword id="KW-0963">Cytoplasm</keyword>
<keyword id="KW-0436">Ligase</keyword>
<keyword id="KW-0547">Nucleotide-binding</keyword>
<keyword id="KW-0648">Protein biosynthesis</keyword>
<keyword id="KW-1185">Reference proteome</keyword>